<reference key="1">
    <citation type="journal article" date="2011" name="J. Bacteriol.">
        <title>Genome sequence of Thermotoga sp. strain RQ2, a hyperthermophilic bacterium isolated from a geothermally heated region of the seafloor near Ribeira Quente, the Azores.</title>
        <authorList>
            <person name="Swithers K.S."/>
            <person name="DiPippo J.L."/>
            <person name="Bruce D.C."/>
            <person name="Detter C."/>
            <person name="Tapia R."/>
            <person name="Han S."/>
            <person name="Saunders E."/>
            <person name="Goodwin L.A."/>
            <person name="Han J."/>
            <person name="Woyke T."/>
            <person name="Pitluck S."/>
            <person name="Pennacchio L."/>
            <person name="Nolan M."/>
            <person name="Mikhailova N."/>
            <person name="Lykidis A."/>
            <person name="Land M.L."/>
            <person name="Brettin T."/>
            <person name="Stetter K.O."/>
            <person name="Nelson K.E."/>
            <person name="Gogarten J.P."/>
            <person name="Noll K.M."/>
        </authorList>
    </citation>
    <scope>NUCLEOTIDE SEQUENCE [LARGE SCALE GENOMIC DNA]</scope>
    <source>
        <strain>RQ2</strain>
    </source>
</reference>
<name>RL25_THESQ</name>
<organism>
    <name type="scientific">Thermotoga sp. (strain RQ2)</name>
    <dbReference type="NCBI Taxonomy" id="126740"/>
    <lineage>
        <taxon>Bacteria</taxon>
        <taxon>Thermotogati</taxon>
        <taxon>Thermotogota</taxon>
        <taxon>Thermotogae</taxon>
        <taxon>Thermotogales</taxon>
        <taxon>Thermotogaceae</taxon>
        <taxon>Thermotoga</taxon>
    </lineage>
</organism>
<accession>B1LBD7</accession>
<dbReference type="EMBL" id="CP000969">
    <property type="protein sequence ID" value="ACB09635.1"/>
    <property type="molecule type" value="Genomic_DNA"/>
</dbReference>
<dbReference type="RefSeq" id="WP_012311045.1">
    <property type="nucleotide sequence ID" value="NC_010483.1"/>
</dbReference>
<dbReference type="SMR" id="B1LBD7"/>
<dbReference type="KEGG" id="trq:TRQ2_1291"/>
<dbReference type="HOGENOM" id="CLU_075939_2_1_0"/>
<dbReference type="Proteomes" id="UP000001687">
    <property type="component" value="Chromosome"/>
</dbReference>
<dbReference type="GO" id="GO:0022625">
    <property type="term" value="C:cytosolic large ribosomal subunit"/>
    <property type="evidence" value="ECO:0007669"/>
    <property type="project" value="TreeGrafter"/>
</dbReference>
<dbReference type="GO" id="GO:0008097">
    <property type="term" value="F:5S rRNA binding"/>
    <property type="evidence" value="ECO:0007669"/>
    <property type="project" value="InterPro"/>
</dbReference>
<dbReference type="GO" id="GO:0003735">
    <property type="term" value="F:structural constituent of ribosome"/>
    <property type="evidence" value="ECO:0007669"/>
    <property type="project" value="InterPro"/>
</dbReference>
<dbReference type="GO" id="GO:0006412">
    <property type="term" value="P:translation"/>
    <property type="evidence" value="ECO:0007669"/>
    <property type="project" value="UniProtKB-UniRule"/>
</dbReference>
<dbReference type="CDD" id="cd00495">
    <property type="entry name" value="Ribosomal_L25_TL5_CTC"/>
    <property type="match status" value="1"/>
</dbReference>
<dbReference type="FunFam" id="2.170.120.20:FF:000003">
    <property type="entry name" value="50S ribosomal protein L25"/>
    <property type="match status" value="1"/>
</dbReference>
<dbReference type="Gene3D" id="2.170.120.20">
    <property type="entry name" value="Ribosomal protein L25, beta domain"/>
    <property type="match status" value="1"/>
</dbReference>
<dbReference type="Gene3D" id="2.40.240.10">
    <property type="entry name" value="Ribosomal Protein L25, Chain P"/>
    <property type="match status" value="1"/>
</dbReference>
<dbReference type="HAMAP" id="MF_01334">
    <property type="entry name" value="Ribosomal_bL25_CTC"/>
    <property type="match status" value="1"/>
</dbReference>
<dbReference type="InterPro" id="IPR020056">
    <property type="entry name" value="Rbsml_bL25/Gln-tRNA_synth_N"/>
</dbReference>
<dbReference type="InterPro" id="IPR011035">
    <property type="entry name" value="Ribosomal_bL25/Gln-tRNA_synth"/>
</dbReference>
<dbReference type="InterPro" id="IPR020057">
    <property type="entry name" value="Ribosomal_bL25_b-dom"/>
</dbReference>
<dbReference type="InterPro" id="IPR037121">
    <property type="entry name" value="Ribosomal_bL25_C"/>
</dbReference>
<dbReference type="InterPro" id="IPR001021">
    <property type="entry name" value="Ribosomal_bL25_long"/>
</dbReference>
<dbReference type="InterPro" id="IPR029751">
    <property type="entry name" value="Ribosomal_L25_dom"/>
</dbReference>
<dbReference type="InterPro" id="IPR020930">
    <property type="entry name" value="Ribosomal_uL5_bac-type"/>
</dbReference>
<dbReference type="NCBIfam" id="TIGR00731">
    <property type="entry name" value="bL25_bact_ctc"/>
    <property type="match status" value="1"/>
</dbReference>
<dbReference type="PANTHER" id="PTHR33284">
    <property type="entry name" value="RIBOSOMAL PROTEIN L25/GLN-TRNA SYNTHETASE, ANTI-CODON-BINDING DOMAIN-CONTAINING PROTEIN"/>
    <property type="match status" value="1"/>
</dbReference>
<dbReference type="PANTHER" id="PTHR33284:SF1">
    <property type="entry name" value="RIBOSOMAL PROTEIN L25_GLN-TRNA SYNTHETASE, ANTI-CODON-BINDING DOMAIN-CONTAINING PROTEIN"/>
    <property type="match status" value="1"/>
</dbReference>
<dbReference type="Pfam" id="PF01386">
    <property type="entry name" value="Ribosomal_L25p"/>
    <property type="match status" value="1"/>
</dbReference>
<dbReference type="Pfam" id="PF14693">
    <property type="entry name" value="Ribosomal_TL5_C"/>
    <property type="match status" value="1"/>
</dbReference>
<dbReference type="SUPFAM" id="SSF50715">
    <property type="entry name" value="Ribosomal protein L25-like"/>
    <property type="match status" value="1"/>
</dbReference>
<sequence>MVSLEARVREVKGKREARRLRRSGEVPAVVYGPATEPIPVKIKRSVLEKIFHTISEATPIQLIIKDDQGNTVAEKTVFLKMVQRDKVSETVVHLDFYEPTKGHRMRINVPLKVVGKPVGVEKGGFLEVFHEEIPVETDPDKVPQEIEVDVSSLDLGDVIHARDLKLPEGVKCLLEEEEAVVSVLVPKEVAIEEATEEEEEAAEPEVIKRKEEEEE</sequence>
<proteinExistence type="inferred from homology"/>
<keyword id="KW-0687">Ribonucleoprotein</keyword>
<keyword id="KW-0689">Ribosomal protein</keyword>
<keyword id="KW-0694">RNA-binding</keyword>
<keyword id="KW-0699">rRNA-binding</keyword>
<gene>
    <name evidence="1" type="primary">rplY</name>
    <name evidence="1" type="synonym">ctc</name>
    <name type="ordered locus">TRQ2_1291</name>
</gene>
<comment type="function">
    <text evidence="1">This is one of the proteins that binds to the 5S RNA in the ribosome where it forms part of the central protuberance.</text>
</comment>
<comment type="subunit">
    <text evidence="1">Part of the 50S ribosomal subunit; part of the 5S rRNA/L5/L18/L25 subcomplex. Contacts the 5S rRNA. Binds to the 5S rRNA independently of L5 and L18.</text>
</comment>
<comment type="similarity">
    <text evidence="1">Belongs to the bacterial ribosomal protein bL25 family. CTC subfamily.</text>
</comment>
<feature type="chain" id="PRO_1000142558" description="Large ribosomal subunit protein bL25">
    <location>
        <begin position="1"/>
        <end position="215"/>
    </location>
</feature>
<feature type="region of interest" description="Disordered" evidence="2">
    <location>
        <begin position="192"/>
        <end position="215"/>
    </location>
</feature>
<feature type="compositionally biased region" description="Acidic residues" evidence="2">
    <location>
        <begin position="192"/>
        <end position="203"/>
    </location>
</feature>
<feature type="compositionally biased region" description="Basic and acidic residues" evidence="2">
    <location>
        <begin position="205"/>
        <end position="215"/>
    </location>
</feature>
<protein>
    <recommendedName>
        <fullName evidence="1">Large ribosomal subunit protein bL25</fullName>
    </recommendedName>
    <alternativeName>
        <fullName evidence="3">50S ribosomal protein L25</fullName>
    </alternativeName>
    <alternativeName>
        <fullName evidence="1">General stress protein CTC</fullName>
    </alternativeName>
</protein>
<evidence type="ECO:0000255" key="1">
    <source>
        <dbReference type="HAMAP-Rule" id="MF_01334"/>
    </source>
</evidence>
<evidence type="ECO:0000256" key="2">
    <source>
        <dbReference type="SAM" id="MobiDB-lite"/>
    </source>
</evidence>
<evidence type="ECO:0000305" key="3"/>